<keyword id="KW-0687">Ribonucleoprotein</keyword>
<keyword id="KW-0689">Ribosomal protein</keyword>
<keyword id="KW-0694">RNA-binding</keyword>
<keyword id="KW-0699">rRNA-binding</keyword>
<gene>
    <name evidence="1" type="primary">rpsO</name>
    <name type="ordered locus">YpsIP31758_3593</name>
</gene>
<comment type="function">
    <text evidence="1">One of the primary rRNA binding proteins, it binds directly to 16S rRNA where it helps nucleate assembly of the platform of the 30S subunit by binding and bridging several RNA helices of the 16S rRNA.</text>
</comment>
<comment type="function">
    <text evidence="1">Forms an intersubunit bridge (bridge B4) with the 23S rRNA of the 50S subunit in the ribosome.</text>
</comment>
<comment type="subunit">
    <text evidence="1">Part of the 30S ribosomal subunit. Forms a bridge to the 50S subunit in the 70S ribosome, contacting the 23S rRNA.</text>
</comment>
<comment type="similarity">
    <text evidence="1">Belongs to the universal ribosomal protein uS15 family.</text>
</comment>
<sequence>MSLSVEAKAKIVADFGRGTNDTGSSEVQVALLTAQINHLQGHFSEHKKDHHSRRGLLRMVSTRRKLLDYLKRQDVARYASLIERLGLRR</sequence>
<name>RS15_YERP3</name>
<dbReference type="EMBL" id="CP000720">
    <property type="protein sequence ID" value="ABS46877.1"/>
    <property type="molecule type" value="Genomic_DNA"/>
</dbReference>
<dbReference type="RefSeq" id="WP_002209257.1">
    <property type="nucleotide sequence ID" value="NC_009708.1"/>
</dbReference>
<dbReference type="SMR" id="A7FMR9"/>
<dbReference type="GeneID" id="96663990"/>
<dbReference type="KEGG" id="ypi:YpsIP31758_3593"/>
<dbReference type="HOGENOM" id="CLU_148518_0_0_6"/>
<dbReference type="Proteomes" id="UP000002412">
    <property type="component" value="Chromosome"/>
</dbReference>
<dbReference type="GO" id="GO:0022627">
    <property type="term" value="C:cytosolic small ribosomal subunit"/>
    <property type="evidence" value="ECO:0007669"/>
    <property type="project" value="TreeGrafter"/>
</dbReference>
<dbReference type="GO" id="GO:0019843">
    <property type="term" value="F:rRNA binding"/>
    <property type="evidence" value="ECO:0007669"/>
    <property type="project" value="UniProtKB-UniRule"/>
</dbReference>
<dbReference type="GO" id="GO:0003735">
    <property type="term" value="F:structural constituent of ribosome"/>
    <property type="evidence" value="ECO:0007669"/>
    <property type="project" value="InterPro"/>
</dbReference>
<dbReference type="GO" id="GO:0006412">
    <property type="term" value="P:translation"/>
    <property type="evidence" value="ECO:0007669"/>
    <property type="project" value="UniProtKB-UniRule"/>
</dbReference>
<dbReference type="CDD" id="cd00353">
    <property type="entry name" value="Ribosomal_S15p_S13e"/>
    <property type="match status" value="1"/>
</dbReference>
<dbReference type="FunFam" id="1.10.287.10:FF:000002">
    <property type="entry name" value="30S ribosomal protein S15"/>
    <property type="match status" value="1"/>
</dbReference>
<dbReference type="Gene3D" id="6.10.250.3130">
    <property type="match status" value="1"/>
</dbReference>
<dbReference type="Gene3D" id="1.10.287.10">
    <property type="entry name" value="S15/NS1, RNA-binding"/>
    <property type="match status" value="1"/>
</dbReference>
<dbReference type="HAMAP" id="MF_01343_B">
    <property type="entry name" value="Ribosomal_uS15_B"/>
    <property type="match status" value="1"/>
</dbReference>
<dbReference type="InterPro" id="IPR000589">
    <property type="entry name" value="Ribosomal_uS15"/>
</dbReference>
<dbReference type="InterPro" id="IPR005290">
    <property type="entry name" value="Ribosomal_uS15_bac-type"/>
</dbReference>
<dbReference type="InterPro" id="IPR009068">
    <property type="entry name" value="uS15_NS1_RNA-bd_sf"/>
</dbReference>
<dbReference type="NCBIfam" id="TIGR00952">
    <property type="entry name" value="S15_bact"/>
    <property type="match status" value="1"/>
</dbReference>
<dbReference type="PANTHER" id="PTHR23321">
    <property type="entry name" value="RIBOSOMAL PROTEIN S15, BACTERIAL AND ORGANELLAR"/>
    <property type="match status" value="1"/>
</dbReference>
<dbReference type="PANTHER" id="PTHR23321:SF26">
    <property type="entry name" value="SMALL RIBOSOMAL SUBUNIT PROTEIN US15M"/>
    <property type="match status" value="1"/>
</dbReference>
<dbReference type="Pfam" id="PF00312">
    <property type="entry name" value="Ribosomal_S15"/>
    <property type="match status" value="1"/>
</dbReference>
<dbReference type="SMART" id="SM01387">
    <property type="entry name" value="Ribosomal_S15"/>
    <property type="match status" value="1"/>
</dbReference>
<dbReference type="SUPFAM" id="SSF47060">
    <property type="entry name" value="S15/NS1 RNA-binding domain"/>
    <property type="match status" value="1"/>
</dbReference>
<dbReference type="PROSITE" id="PS00362">
    <property type="entry name" value="RIBOSOMAL_S15"/>
    <property type="match status" value="1"/>
</dbReference>
<proteinExistence type="inferred from homology"/>
<feature type="chain" id="PRO_1000067694" description="Small ribosomal subunit protein uS15">
    <location>
        <begin position="1"/>
        <end position="89"/>
    </location>
</feature>
<accession>A7FMR9</accession>
<organism>
    <name type="scientific">Yersinia pseudotuberculosis serotype O:1b (strain IP 31758)</name>
    <dbReference type="NCBI Taxonomy" id="349747"/>
    <lineage>
        <taxon>Bacteria</taxon>
        <taxon>Pseudomonadati</taxon>
        <taxon>Pseudomonadota</taxon>
        <taxon>Gammaproteobacteria</taxon>
        <taxon>Enterobacterales</taxon>
        <taxon>Yersiniaceae</taxon>
        <taxon>Yersinia</taxon>
    </lineage>
</organism>
<protein>
    <recommendedName>
        <fullName evidence="1">Small ribosomal subunit protein uS15</fullName>
    </recommendedName>
    <alternativeName>
        <fullName evidence="2">30S ribosomal protein S15</fullName>
    </alternativeName>
</protein>
<reference key="1">
    <citation type="journal article" date="2007" name="PLoS Genet.">
        <title>The complete genome sequence of Yersinia pseudotuberculosis IP31758, the causative agent of Far East scarlet-like fever.</title>
        <authorList>
            <person name="Eppinger M."/>
            <person name="Rosovitz M.J."/>
            <person name="Fricke W.F."/>
            <person name="Rasko D.A."/>
            <person name="Kokorina G."/>
            <person name="Fayolle C."/>
            <person name="Lindler L.E."/>
            <person name="Carniel E."/>
            <person name="Ravel J."/>
        </authorList>
    </citation>
    <scope>NUCLEOTIDE SEQUENCE [LARGE SCALE GENOMIC DNA]</scope>
    <source>
        <strain>IP 31758</strain>
    </source>
</reference>
<evidence type="ECO:0000255" key="1">
    <source>
        <dbReference type="HAMAP-Rule" id="MF_01343"/>
    </source>
</evidence>
<evidence type="ECO:0000305" key="2"/>